<name>PHYDA_ECOUT</name>
<evidence type="ECO:0000255" key="1">
    <source>
        <dbReference type="HAMAP-Rule" id="MF_01644"/>
    </source>
</evidence>
<evidence type="ECO:0000305" key="2"/>
<reference key="1">
    <citation type="journal article" date="2006" name="Proc. Natl. Acad. Sci. U.S.A.">
        <title>Identification of genes subject to positive selection in uropathogenic strains of Escherichia coli: a comparative genomics approach.</title>
        <authorList>
            <person name="Chen S.L."/>
            <person name="Hung C.-S."/>
            <person name="Xu J."/>
            <person name="Reigstad C.S."/>
            <person name="Magrini V."/>
            <person name="Sabo A."/>
            <person name="Blasiar D."/>
            <person name="Bieri T."/>
            <person name="Meyer R.R."/>
            <person name="Ozersky P."/>
            <person name="Armstrong J.R."/>
            <person name="Fulton R.S."/>
            <person name="Latreille J.P."/>
            <person name="Spieth J."/>
            <person name="Hooton T.M."/>
            <person name="Mardis E.R."/>
            <person name="Hultgren S.J."/>
            <person name="Gordon J.I."/>
        </authorList>
    </citation>
    <scope>NUCLEOTIDE SEQUENCE [LARGE SCALE GENOMIC DNA]</scope>
    <source>
        <strain>UTI89 / UPEC</strain>
    </source>
</reference>
<proteinExistence type="inferred from homology"/>
<dbReference type="EC" id="3.5.2.-" evidence="1"/>
<dbReference type="EMBL" id="CP000243">
    <property type="protein sequence ID" value="ABE08706.1"/>
    <property type="status" value="ALT_INIT"/>
    <property type="molecule type" value="Genomic_DNA"/>
</dbReference>
<dbReference type="RefSeq" id="WP_001264431.1">
    <property type="nucleotide sequence ID" value="NZ_CP064825.1"/>
</dbReference>
<dbReference type="SMR" id="Q1R7F8"/>
<dbReference type="KEGG" id="eci:UTI89_C3258"/>
<dbReference type="HOGENOM" id="CLU_015572_2_0_6"/>
<dbReference type="Proteomes" id="UP000001952">
    <property type="component" value="Chromosome"/>
</dbReference>
<dbReference type="GO" id="GO:0005829">
    <property type="term" value="C:cytosol"/>
    <property type="evidence" value="ECO:0007669"/>
    <property type="project" value="TreeGrafter"/>
</dbReference>
<dbReference type="GO" id="GO:0016812">
    <property type="term" value="F:hydrolase activity, acting on carbon-nitrogen (but not peptide) bonds, in cyclic amides"/>
    <property type="evidence" value="ECO:0007669"/>
    <property type="project" value="UniProtKB-UniRule"/>
</dbReference>
<dbReference type="GO" id="GO:0046872">
    <property type="term" value="F:metal ion binding"/>
    <property type="evidence" value="ECO:0007669"/>
    <property type="project" value="UniProtKB-KW"/>
</dbReference>
<dbReference type="GO" id="GO:0006208">
    <property type="term" value="P:pyrimidine nucleobase catabolic process"/>
    <property type="evidence" value="ECO:0007669"/>
    <property type="project" value="InterPro"/>
</dbReference>
<dbReference type="CDD" id="cd01314">
    <property type="entry name" value="D-HYD"/>
    <property type="match status" value="1"/>
</dbReference>
<dbReference type="FunFam" id="3.20.20.140:FF:000026">
    <property type="entry name" value="D-phenylhydantoinase"/>
    <property type="match status" value="1"/>
</dbReference>
<dbReference type="Gene3D" id="3.20.20.140">
    <property type="entry name" value="Metal-dependent hydrolases"/>
    <property type="match status" value="1"/>
</dbReference>
<dbReference type="Gene3D" id="2.30.40.10">
    <property type="entry name" value="Urease, subunit C, domain 1"/>
    <property type="match status" value="1"/>
</dbReference>
<dbReference type="HAMAP" id="MF_01644">
    <property type="entry name" value="D_hydantoinase"/>
    <property type="match status" value="1"/>
</dbReference>
<dbReference type="InterPro" id="IPR006680">
    <property type="entry name" value="Amidohydro-rel"/>
</dbReference>
<dbReference type="InterPro" id="IPR023766">
    <property type="entry name" value="D_phenylhydantoinase"/>
</dbReference>
<dbReference type="InterPro" id="IPR011778">
    <property type="entry name" value="Hydantoinase/dihydroPyrase"/>
</dbReference>
<dbReference type="InterPro" id="IPR011059">
    <property type="entry name" value="Metal-dep_hydrolase_composite"/>
</dbReference>
<dbReference type="InterPro" id="IPR032466">
    <property type="entry name" value="Metal_Hydrolase"/>
</dbReference>
<dbReference type="InterPro" id="IPR050378">
    <property type="entry name" value="Metallo-dep_Hydrolases_sf"/>
</dbReference>
<dbReference type="NCBIfam" id="TIGR02033">
    <property type="entry name" value="D-hydantoinase"/>
    <property type="match status" value="1"/>
</dbReference>
<dbReference type="PANTHER" id="PTHR11647:SF1">
    <property type="entry name" value="COLLAPSIN RESPONSE MEDIATOR PROTEIN"/>
    <property type="match status" value="1"/>
</dbReference>
<dbReference type="PANTHER" id="PTHR11647">
    <property type="entry name" value="HYDRANTOINASE/DIHYDROPYRIMIDINASE FAMILY MEMBER"/>
    <property type="match status" value="1"/>
</dbReference>
<dbReference type="Pfam" id="PF01979">
    <property type="entry name" value="Amidohydro_1"/>
    <property type="match status" value="1"/>
</dbReference>
<dbReference type="SUPFAM" id="SSF51338">
    <property type="entry name" value="Composite domain of metallo-dependent hydrolases"/>
    <property type="match status" value="2"/>
</dbReference>
<dbReference type="SUPFAM" id="SSF51556">
    <property type="entry name" value="Metallo-dependent hydrolases"/>
    <property type="match status" value="1"/>
</dbReference>
<sequence length="461" mass="50971">MRVLIKNGIVVNADGQAKQDLLIESGIVRQLGTDISPQLPCEEIDASGCYVFPGGVDVHTHFNIDVGIARSCDDFFTGTRAAACGGTTTIIDHMGFGPNGCRLRHQLEVYRGYAAHKAVIDYSFHGVIQHINHAILDEIPMMVEEGLSSFKLYLTYQYKLNDDEVLQALRRLHESGALTTVHPENDAAIASKRAEFIAAGLTAPRYHALSRPLECEAEAIARMINLAQIAGNAPLYIVHLSNGLGLDYLRLARANHQPVWVETCPQYLLLDERSYDTEDGMKFILSPPLRNVREQDKLWCGISDGAIDVVATDHCTFSMAQRLQISKGDFSRCPNGLPGVENRMQLLFSSGVMTGRISLERFVELTSAMPARLFGLWPQKGILAPGSDGDVVIIDPRQSQQIQHRHLHDNADYSPWEGFTCQGAIVRTLSRGETIFCDGTFTGKAGRGRFLRRKPFVPPVL</sequence>
<accession>Q1R7F8</accession>
<organism>
    <name type="scientific">Escherichia coli (strain UTI89 / UPEC)</name>
    <dbReference type="NCBI Taxonomy" id="364106"/>
    <lineage>
        <taxon>Bacteria</taxon>
        <taxon>Pseudomonadati</taxon>
        <taxon>Pseudomonadota</taxon>
        <taxon>Gammaproteobacteria</taxon>
        <taxon>Enterobacterales</taxon>
        <taxon>Enterobacteriaceae</taxon>
        <taxon>Escherichia</taxon>
    </lineage>
</organism>
<protein>
    <recommendedName>
        <fullName evidence="1">D-phenylhydantoinase</fullName>
        <ecNumber evidence="1">3.5.2.-</ecNumber>
    </recommendedName>
    <alternativeName>
        <fullName evidence="1">Hydantoin-utilizing enzyme HyuA</fullName>
    </alternativeName>
</protein>
<gene>
    <name evidence="1" type="primary">hyuA</name>
    <name type="synonym">ygeZ</name>
    <name type="ordered locus">UTI89_C3258</name>
</gene>
<keyword id="KW-0378">Hydrolase</keyword>
<keyword id="KW-0479">Metal-binding</keyword>
<feature type="chain" id="PRO_0000317655" description="D-phenylhydantoinase">
    <location>
        <begin position="1"/>
        <end position="461"/>
    </location>
</feature>
<feature type="binding site" evidence="1">
    <location>
        <position position="59"/>
    </location>
    <ligand>
        <name>a divalent metal cation</name>
        <dbReference type="ChEBI" id="CHEBI:60240"/>
        <label>1</label>
    </ligand>
</feature>
<feature type="binding site" evidence="1">
    <location>
        <position position="61"/>
    </location>
    <ligand>
        <name>a divalent metal cation</name>
        <dbReference type="ChEBI" id="CHEBI:60240"/>
        <label>1</label>
    </ligand>
</feature>
<feature type="binding site" description="via carbamate group" evidence="1">
    <location>
        <position position="151"/>
    </location>
    <ligand>
        <name>a divalent metal cation</name>
        <dbReference type="ChEBI" id="CHEBI:60240"/>
        <label>1</label>
    </ligand>
</feature>
<feature type="binding site" description="via carbamate group" evidence="1">
    <location>
        <position position="151"/>
    </location>
    <ligand>
        <name>a divalent metal cation</name>
        <dbReference type="ChEBI" id="CHEBI:60240"/>
        <label>2</label>
    </ligand>
</feature>
<feature type="binding site" evidence="1">
    <location>
        <position position="156"/>
    </location>
    <ligand>
        <name>substrate</name>
    </ligand>
</feature>
<feature type="binding site" evidence="1">
    <location>
        <position position="182"/>
    </location>
    <ligand>
        <name>a divalent metal cation</name>
        <dbReference type="ChEBI" id="CHEBI:60240"/>
        <label>2</label>
    </ligand>
</feature>
<feature type="binding site" evidence="1">
    <location>
        <position position="239"/>
    </location>
    <ligand>
        <name>a divalent metal cation</name>
        <dbReference type="ChEBI" id="CHEBI:60240"/>
        <label>2</label>
    </ligand>
</feature>
<feature type="binding site" evidence="1">
    <location>
        <position position="286"/>
    </location>
    <ligand>
        <name>substrate</name>
    </ligand>
</feature>
<feature type="binding site" evidence="1">
    <location>
        <position position="313"/>
    </location>
    <ligand>
        <name>a divalent metal cation</name>
        <dbReference type="ChEBI" id="CHEBI:60240"/>
        <label>1</label>
    </ligand>
</feature>
<feature type="binding site" evidence="1">
    <location>
        <position position="335"/>
    </location>
    <ligand>
        <name>substrate</name>
    </ligand>
</feature>
<feature type="modified residue" description="N6-carboxylysine" evidence="1">
    <location>
        <position position="151"/>
    </location>
</feature>
<comment type="function">
    <text evidence="1">Catalyzes the stereospecific hydrolysis of the cyclic amide bond of D-hydantoin derivatives with an aromatic side chains at the 5'-position. Has no activity on dihydropyrimidines. The physiological function is unknown.</text>
</comment>
<comment type="catalytic activity">
    <reaction evidence="1">
        <text>D-5-phenylhydantoin + H2O = N-carbamoyl-D-phenylglycine + H(+)</text>
        <dbReference type="Rhea" id="RHEA:51664"/>
        <dbReference type="ChEBI" id="CHEBI:15377"/>
        <dbReference type="ChEBI" id="CHEBI:15378"/>
        <dbReference type="ChEBI" id="CHEBI:140750"/>
        <dbReference type="ChEBI" id="CHEBI:140758"/>
    </reaction>
</comment>
<comment type="cofactor">
    <cofactor evidence="1">
        <name>a divalent metal cation</name>
        <dbReference type="ChEBI" id="CHEBI:60240"/>
    </cofactor>
    <text evidence="1">Binds 2 divalent metal cations per subunit.</text>
</comment>
<comment type="subunit">
    <text evidence="1">Homotetramer.</text>
</comment>
<comment type="PTM">
    <text evidence="1">Carboxylation allows a single lysine to coordinate two divalent metal cations.</text>
</comment>
<comment type="similarity">
    <text evidence="1">Belongs to the metallo-dependent hydrolases superfamily. Hydantoinase/dihydropyrimidinase family.</text>
</comment>
<comment type="sequence caution" evidence="2">
    <conflict type="erroneous initiation">
        <sequence resource="EMBL-CDS" id="ABE08706"/>
    </conflict>
</comment>